<evidence type="ECO:0000250" key="1"/>
<evidence type="ECO:0000305" key="2"/>
<dbReference type="EC" id="2.7.7.18"/>
<dbReference type="EMBL" id="BA000022">
    <property type="protein sequence ID" value="BAA17273.1"/>
    <property type="molecule type" value="Genomic_DNA"/>
</dbReference>
<dbReference type="PIR" id="S75359">
    <property type="entry name" value="S75359"/>
</dbReference>
<dbReference type="SMR" id="P73246"/>
<dbReference type="FunCoup" id="P73246">
    <property type="interactions" value="371"/>
</dbReference>
<dbReference type="STRING" id="1148.gene:10498136"/>
<dbReference type="PaxDb" id="1148-1652350"/>
<dbReference type="EnsemblBacteria" id="BAA17273">
    <property type="protein sequence ID" value="BAA17273"/>
    <property type="gene ID" value="BAA17273"/>
</dbReference>
<dbReference type="KEGG" id="syn:sll1916"/>
<dbReference type="eggNOG" id="COG1057">
    <property type="taxonomic scope" value="Bacteria"/>
</dbReference>
<dbReference type="InParanoid" id="P73246"/>
<dbReference type="PhylomeDB" id="P73246"/>
<dbReference type="UniPathway" id="UPA00253">
    <property type="reaction ID" value="UER00332"/>
</dbReference>
<dbReference type="Proteomes" id="UP000001425">
    <property type="component" value="Chromosome"/>
</dbReference>
<dbReference type="GO" id="GO:0005524">
    <property type="term" value="F:ATP binding"/>
    <property type="evidence" value="ECO:0007669"/>
    <property type="project" value="UniProtKB-KW"/>
</dbReference>
<dbReference type="GO" id="GO:0000309">
    <property type="term" value="F:nicotinamide-nucleotide adenylyltransferase activity"/>
    <property type="evidence" value="ECO:0000318"/>
    <property type="project" value="GO_Central"/>
</dbReference>
<dbReference type="GO" id="GO:0004515">
    <property type="term" value="F:nicotinate-nucleotide adenylyltransferase activity"/>
    <property type="evidence" value="ECO:0000318"/>
    <property type="project" value="GO_Central"/>
</dbReference>
<dbReference type="GO" id="GO:0009435">
    <property type="term" value="P:NAD biosynthetic process"/>
    <property type="evidence" value="ECO:0000318"/>
    <property type="project" value="GO_Central"/>
</dbReference>
<dbReference type="CDD" id="cd02165">
    <property type="entry name" value="NMNAT"/>
    <property type="match status" value="1"/>
</dbReference>
<dbReference type="Gene3D" id="3.40.50.620">
    <property type="entry name" value="HUPs"/>
    <property type="match status" value="1"/>
</dbReference>
<dbReference type="HAMAP" id="MF_00244">
    <property type="entry name" value="NaMN_adenylyltr"/>
    <property type="match status" value="1"/>
</dbReference>
<dbReference type="InterPro" id="IPR004821">
    <property type="entry name" value="Cyt_trans-like"/>
</dbReference>
<dbReference type="InterPro" id="IPR005248">
    <property type="entry name" value="NadD/NMNAT"/>
</dbReference>
<dbReference type="InterPro" id="IPR014729">
    <property type="entry name" value="Rossmann-like_a/b/a_fold"/>
</dbReference>
<dbReference type="NCBIfam" id="TIGR00482">
    <property type="entry name" value="nicotinate (nicotinamide) nucleotide adenylyltransferase"/>
    <property type="match status" value="1"/>
</dbReference>
<dbReference type="NCBIfam" id="NF000842">
    <property type="entry name" value="PRK00071.2-1"/>
    <property type="match status" value="1"/>
</dbReference>
<dbReference type="PANTHER" id="PTHR39321">
    <property type="entry name" value="NICOTINATE-NUCLEOTIDE ADENYLYLTRANSFERASE-RELATED"/>
    <property type="match status" value="1"/>
</dbReference>
<dbReference type="PANTHER" id="PTHR39321:SF3">
    <property type="entry name" value="PHOSPHOPANTETHEINE ADENYLYLTRANSFERASE"/>
    <property type="match status" value="1"/>
</dbReference>
<dbReference type="Pfam" id="PF01467">
    <property type="entry name" value="CTP_transf_like"/>
    <property type="match status" value="1"/>
</dbReference>
<dbReference type="SUPFAM" id="SSF52374">
    <property type="entry name" value="Nucleotidylyl transferase"/>
    <property type="match status" value="1"/>
</dbReference>
<accession>P73246</accession>
<name>NADD_SYNY3</name>
<sequence length="200" mass="22711">MKIALFGTSADPPTLAHRAILIWLAQHFDQVAVWAADNPFKQGPNPETGHWASLGDRQAMLKLLVEDVQKDYATVQIWEDLSDRRSLISLQRAQQRWGLEPDYALVVGADLIRQISQWYAVKELLPAVQLVIFPRPGYGINQADLDKLAQLGGHYQLVNQGDDQAITPPISSSIYRQIRDDDLIPDPVQSYIQQRQLYRQ</sequence>
<feature type="chain" id="PRO_0000181459" description="Probable nicotinate-nucleotide adenylyltransferase">
    <location>
        <begin position="1"/>
        <end position="200"/>
    </location>
</feature>
<comment type="function">
    <text evidence="1">Catalyzes the reversible adenylation of nicotinate mononucleotide (NaMN) to nicotinic acid adenine dinucleotide (NaAD).</text>
</comment>
<comment type="catalytic activity">
    <reaction>
        <text>nicotinate beta-D-ribonucleotide + ATP + H(+) = deamido-NAD(+) + diphosphate</text>
        <dbReference type="Rhea" id="RHEA:22860"/>
        <dbReference type="ChEBI" id="CHEBI:15378"/>
        <dbReference type="ChEBI" id="CHEBI:30616"/>
        <dbReference type="ChEBI" id="CHEBI:33019"/>
        <dbReference type="ChEBI" id="CHEBI:57502"/>
        <dbReference type="ChEBI" id="CHEBI:58437"/>
        <dbReference type="EC" id="2.7.7.18"/>
    </reaction>
</comment>
<comment type="pathway">
    <text>Cofactor biosynthesis; NAD(+) biosynthesis; deamido-NAD(+) from nicotinate D-ribonucleotide: step 1/1.</text>
</comment>
<comment type="similarity">
    <text evidence="2">Belongs to the NadD family.</text>
</comment>
<keyword id="KW-0067">ATP-binding</keyword>
<keyword id="KW-0520">NAD</keyword>
<keyword id="KW-0547">Nucleotide-binding</keyword>
<keyword id="KW-0548">Nucleotidyltransferase</keyword>
<keyword id="KW-0662">Pyridine nucleotide biosynthesis</keyword>
<keyword id="KW-1185">Reference proteome</keyword>
<keyword id="KW-0808">Transferase</keyword>
<proteinExistence type="inferred from homology"/>
<protein>
    <recommendedName>
        <fullName>Probable nicotinate-nucleotide adenylyltransferase</fullName>
        <ecNumber>2.7.7.18</ecNumber>
    </recommendedName>
    <alternativeName>
        <fullName>Deamido-NAD(+) diphosphorylase</fullName>
    </alternativeName>
    <alternativeName>
        <fullName>Deamido-NAD(+) pyrophosphorylase</fullName>
    </alternativeName>
    <alternativeName>
        <fullName>Nicotinate mononucleotide adenylyltransferase</fullName>
        <shortName>NaMN adenylyltransferase</shortName>
    </alternativeName>
</protein>
<gene>
    <name type="primary">nadD</name>
    <name type="ordered locus">sll1916</name>
</gene>
<organism>
    <name type="scientific">Synechocystis sp. (strain ATCC 27184 / PCC 6803 / Kazusa)</name>
    <dbReference type="NCBI Taxonomy" id="1111708"/>
    <lineage>
        <taxon>Bacteria</taxon>
        <taxon>Bacillati</taxon>
        <taxon>Cyanobacteriota</taxon>
        <taxon>Cyanophyceae</taxon>
        <taxon>Synechococcales</taxon>
        <taxon>Merismopediaceae</taxon>
        <taxon>Synechocystis</taxon>
    </lineage>
</organism>
<reference key="1">
    <citation type="journal article" date="1996" name="DNA Res.">
        <title>Sequence analysis of the genome of the unicellular cyanobacterium Synechocystis sp. strain PCC6803. II. Sequence determination of the entire genome and assignment of potential protein-coding regions.</title>
        <authorList>
            <person name="Kaneko T."/>
            <person name="Sato S."/>
            <person name="Kotani H."/>
            <person name="Tanaka A."/>
            <person name="Asamizu E."/>
            <person name="Nakamura Y."/>
            <person name="Miyajima N."/>
            <person name="Hirosawa M."/>
            <person name="Sugiura M."/>
            <person name="Sasamoto S."/>
            <person name="Kimura T."/>
            <person name="Hosouchi T."/>
            <person name="Matsuno A."/>
            <person name="Muraki A."/>
            <person name="Nakazaki N."/>
            <person name="Naruo K."/>
            <person name="Okumura S."/>
            <person name="Shimpo S."/>
            <person name="Takeuchi C."/>
            <person name="Wada T."/>
            <person name="Watanabe A."/>
            <person name="Yamada M."/>
            <person name="Yasuda M."/>
            <person name="Tabata S."/>
        </authorList>
    </citation>
    <scope>NUCLEOTIDE SEQUENCE [LARGE SCALE GENOMIC DNA]</scope>
    <source>
        <strain>ATCC 27184 / PCC 6803 / Kazusa</strain>
    </source>
</reference>